<keyword id="KW-0963">Cytoplasm</keyword>
<keyword id="KW-0456">Lyase</keyword>
<keyword id="KW-1185">Reference proteome</keyword>
<keyword id="KW-0816">Tricarboxylic acid cycle</keyword>
<sequence length="464" mass="50119">MAATRIEKDSMGPIEVPADQLWGAQTQRSLEHFRISQEKMPVALIHALALTKQAAASVNMDLGLLPQERGEAIIAAAKEVLEGKHPTEFPLAIWQTGSGTQSNMNMNEVLANRGSEILGGVRGSERLIHPNDDVNKSQSSNDVFPTAMHVAAVIALSEHLIPELKILQKTLADKAEAYKDIVKIGRTHLQDATPLTLGQEISGWAAMLTHNLKHIEDSIPHVCELALGGTAVGTGLNTHPEYAVRVAKKLAELTNHSFVTAPNKFEALATCDALVHSHGALKGLAASIMKIANDVRWLASGPRCGIGEISIPENEPGSSIMPGKVNPTQCEAVTMLCAQVMGNDVAINIGGASGNFELNVFRPMVINNFLQSVRLLADGMRSFNEHCAVGIEPNRDRITQLLNESLMLVTALNTHIGYDKAAEIAKKAHKEGLTLKQSAMKLGYLTEAEFDEWVRPEDMVGSLK</sequence>
<protein>
    <recommendedName>
        <fullName evidence="1">Fumarate hydratase class II</fullName>
        <shortName evidence="1">Fumarase C</shortName>
        <ecNumber evidence="1">4.2.1.2</ecNumber>
    </recommendedName>
    <alternativeName>
        <fullName evidence="1">Aerobic fumarase</fullName>
    </alternativeName>
    <alternativeName>
        <fullName evidence="1">Iron-independent fumarase</fullName>
    </alternativeName>
</protein>
<gene>
    <name evidence="1" type="primary">fumC</name>
    <name type="ordered locus">plu2359</name>
</gene>
<reference key="1">
    <citation type="journal article" date="2003" name="Nat. Biotechnol.">
        <title>The genome sequence of the entomopathogenic bacterium Photorhabdus luminescens.</title>
        <authorList>
            <person name="Duchaud E."/>
            <person name="Rusniok C."/>
            <person name="Frangeul L."/>
            <person name="Buchrieser C."/>
            <person name="Givaudan A."/>
            <person name="Taourit S."/>
            <person name="Bocs S."/>
            <person name="Boursaux-Eude C."/>
            <person name="Chandler M."/>
            <person name="Charles J.-F."/>
            <person name="Dassa E."/>
            <person name="Derose R."/>
            <person name="Derzelle S."/>
            <person name="Freyssinet G."/>
            <person name="Gaudriault S."/>
            <person name="Medigue C."/>
            <person name="Lanois A."/>
            <person name="Powell K."/>
            <person name="Siguier P."/>
            <person name="Vincent R."/>
            <person name="Wingate V."/>
            <person name="Zouine M."/>
            <person name="Glaser P."/>
            <person name="Boemare N."/>
            <person name="Danchin A."/>
            <person name="Kunst F."/>
        </authorList>
    </citation>
    <scope>NUCLEOTIDE SEQUENCE [LARGE SCALE GENOMIC DNA]</scope>
    <source>
        <strain>DSM 15139 / CIP 105565 / TT01</strain>
    </source>
</reference>
<dbReference type="EC" id="4.2.1.2" evidence="1"/>
<dbReference type="EMBL" id="BX571866">
    <property type="protein sequence ID" value="CAE14652.1"/>
    <property type="molecule type" value="Genomic_DNA"/>
</dbReference>
<dbReference type="RefSeq" id="WP_011146595.1">
    <property type="nucleotide sequence ID" value="NC_005126.1"/>
</dbReference>
<dbReference type="SMR" id="Q7N4H8"/>
<dbReference type="STRING" id="243265.plu2359"/>
<dbReference type="GeneID" id="48848631"/>
<dbReference type="KEGG" id="plu:plu2359"/>
<dbReference type="eggNOG" id="COG0114">
    <property type="taxonomic scope" value="Bacteria"/>
</dbReference>
<dbReference type="HOGENOM" id="CLU_021594_4_1_6"/>
<dbReference type="OrthoDB" id="9802809at2"/>
<dbReference type="UniPathway" id="UPA00223">
    <property type="reaction ID" value="UER01007"/>
</dbReference>
<dbReference type="Proteomes" id="UP000002514">
    <property type="component" value="Chromosome"/>
</dbReference>
<dbReference type="GO" id="GO:0005737">
    <property type="term" value="C:cytoplasm"/>
    <property type="evidence" value="ECO:0007669"/>
    <property type="project" value="UniProtKB-SubCell"/>
</dbReference>
<dbReference type="GO" id="GO:0004333">
    <property type="term" value="F:fumarate hydratase activity"/>
    <property type="evidence" value="ECO:0007669"/>
    <property type="project" value="UniProtKB-UniRule"/>
</dbReference>
<dbReference type="GO" id="GO:0006106">
    <property type="term" value="P:fumarate metabolic process"/>
    <property type="evidence" value="ECO:0007669"/>
    <property type="project" value="InterPro"/>
</dbReference>
<dbReference type="GO" id="GO:0006108">
    <property type="term" value="P:malate metabolic process"/>
    <property type="evidence" value="ECO:0007669"/>
    <property type="project" value="TreeGrafter"/>
</dbReference>
<dbReference type="GO" id="GO:0006099">
    <property type="term" value="P:tricarboxylic acid cycle"/>
    <property type="evidence" value="ECO:0007669"/>
    <property type="project" value="UniProtKB-UniRule"/>
</dbReference>
<dbReference type="CDD" id="cd01362">
    <property type="entry name" value="Fumarase_classII"/>
    <property type="match status" value="1"/>
</dbReference>
<dbReference type="FunFam" id="1.10.40.30:FF:000002">
    <property type="entry name" value="Fumarate hydratase class II"/>
    <property type="match status" value="1"/>
</dbReference>
<dbReference type="FunFam" id="1.10.275.10:FF:000001">
    <property type="entry name" value="Fumarate hydratase, mitochondrial"/>
    <property type="match status" value="1"/>
</dbReference>
<dbReference type="FunFam" id="1.20.200.10:FF:000001">
    <property type="entry name" value="Fumarate hydratase, mitochondrial"/>
    <property type="match status" value="1"/>
</dbReference>
<dbReference type="Gene3D" id="1.10.40.30">
    <property type="entry name" value="Fumarase/aspartase (C-terminal domain)"/>
    <property type="match status" value="1"/>
</dbReference>
<dbReference type="Gene3D" id="1.20.200.10">
    <property type="entry name" value="Fumarase/aspartase (Central domain)"/>
    <property type="match status" value="1"/>
</dbReference>
<dbReference type="Gene3D" id="1.10.275.10">
    <property type="entry name" value="Fumarase/aspartase (N-terminal domain)"/>
    <property type="match status" value="1"/>
</dbReference>
<dbReference type="HAMAP" id="MF_00743">
    <property type="entry name" value="FumaraseC"/>
    <property type="match status" value="1"/>
</dbReference>
<dbReference type="InterPro" id="IPR005677">
    <property type="entry name" value="Fum_hydII"/>
</dbReference>
<dbReference type="InterPro" id="IPR024083">
    <property type="entry name" value="Fumarase/histidase_N"/>
</dbReference>
<dbReference type="InterPro" id="IPR018951">
    <property type="entry name" value="Fumarase_C_C"/>
</dbReference>
<dbReference type="InterPro" id="IPR020557">
    <property type="entry name" value="Fumarate_lyase_CS"/>
</dbReference>
<dbReference type="InterPro" id="IPR000362">
    <property type="entry name" value="Fumarate_lyase_fam"/>
</dbReference>
<dbReference type="InterPro" id="IPR022761">
    <property type="entry name" value="Fumarate_lyase_N"/>
</dbReference>
<dbReference type="InterPro" id="IPR008948">
    <property type="entry name" value="L-Aspartase-like"/>
</dbReference>
<dbReference type="NCBIfam" id="TIGR00979">
    <property type="entry name" value="fumC_II"/>
    <property type="match status" value="1"/>
</dbReference>
<dbReference type="NCBIfam" id="NF008909">
    <property type="entry name" value="PRK12273.1"/>
    <property type="match status" value="1"/>
</dbReference>
<dbReference type="PANTHER" id="PTHR11444">
    <property type="entry name" value="ASPARTATEAMMONIA/ARGININOSUCCINATE/ADENYLOSUCCINATE LYASE"/>
    <property type="match status" value="1"/>
</dbReference>
<dbReference type="PANTHER" id="PTHR11444:SF1">
    <property type="entry name" value="FUMARATE HYDRATASE, MITOCHONDRIAL"/>
    <property type="match status" value="1"/>
</dbReference>
<dbReference type="Pfam" id="PF10415">
    <property type="entry name" value="FumaraseC_C"/>
    <property type="match status" value="1"/>
</dbReference>
<dbReference type="Pfam" id="PF00206">
    <property type="entry name" value="Lyase_1"/>
    <property type="match status" value="1"/>
</dbReference>
<dbReference type="PRINTS" id="PR00145">
    <property type="entry name" value="ARGSUCLYASE"/>
</dbReference>
<dbReference type="PRINTS" id="PR00149">
    <property type="entry name" value="FUMRATELYASE"/>
</dbReference>
<dbReference type="SUPFAM" id="SSF48557">
    <property type="entry name" value="L-aspartase-like"/>
    <property type="match status" value="1"/>
</dbReference>
<dbReference type="PROSITE" id="PS00163">
    <property type="entry name" value="FUMARATE_LYASES"/>
    <property type="match status" value="1"/>
</dbReference>
<comment type="function">
    <text evidence="1">Involved in the TCA cycle. Catalyzes the stereospecific interconversion of fumarate to L-malate.</text>
</comment>
<comment type="catalytic activity">
    <reaction evidence="1">
        <text>(S)-malate = fumarate + H2O</text>
        <dbReference type="Rhea" id="RHEA:12460"/>
        <dbReference type="ChEBI" id="CHEBI:15377"/>
        <dbReference type="ChEBI" id="CHEBI:15589"/>
        <dbReference type="ChEBI" id="CHEBI:29806"/>
        <dbReference type="EC" id="4.2.1.2"/>
    </reaction>
</comment>
<comment type="pathway">
    <text evidence="1">Carbohydrate metabolism; tricarboxylic acid cycle; (S)-malate from fumarate: step 1/1.</text>
</comment>
<comment type="subunit">
    <text evidence="1">Homotetramer.</text>
</comment>
<comment type="subcellular location">
    <subcellularLocation>
        <location evidence="1">Cytoplasm</location>
    </subcellularLocation>
</comment>
<comment type="miscellaneous">
    <text evidence="1">There are 2 substrate-binding sites: the catalytic A site, and the non-catalytic B site that may play a role in the transfer of substrate or product between the active site and the solvent. Alternatively, the B site may bind allosteric effectors.</text>
</comment>
<comment type="similarity">
    <text evidence="1">Belongs to the class-II fumarase/aspartase family. Fumarase subfamily.</text>
</comment>
<evidence type="ECO:0000255" key="1">
    <source>
        <dbReference type="HAMAP-Rule" id="MF_00743"/>
    </source>
</evidence>
<name>FUMC_PHOLL</name>
<proteinExistence type="inferred from homology"/>
<organism>
    <name type="scientific">Photorhabdus laumondii subsp. laumondii (strain DSM 15139 / CIP 105565 / TT01)</name>
    <name type="common">Photorhabdus luminescens subsp. laumondii</name>
    <dbReference type="NCBI Taxonomy" id="243265"/>
    <lineage>
        <taxon>Bacteria</taxon>
        <taxon>Pseudomonadati</taxon>
        <taxon>Pseudomonadota</taxon>
        <taxon>Gammaproteobacteria</taxon>
        <taxon>Enterobacterales</taxon>
        <taxon>Morganellaceae</taxon>
        <taxon>Photorhabdus</taxon>
    </lineage>
</organism>
<feature type="chain" id="PRO_0000161295" description="Fumarate hydratase class II">
    <location>
        <begin position="1"/>
        <end position="464"/>
    </location>
</feature>
<feature type="active site" description="Proton donor/acceptor" evidence="1">
    <location>
        <position position="188"/>
    </location>
</feature>
<feature type="active site" evidence="1">
    <location>
        <position position="318"/>
    </location>
</feature>
<feature type="binding site" evidence="1">
    <location>
        <begin position="98"/>
        <end position="100"/>
    </location>
    <ligand>
        <name>substrate</name>
    </ligand>
</feature>
<feature type="binding site" evidence="1">
    <location>
        <position position="126"/>
    </location>
    <ligand>
        <name>substrate</name>
    </ligand>
</feature>
<feature type="binding site" description="in site B" evidence="1">
    <location>
        <begin position="129"/>
        <end position="132"/>
    </location>
    <ligand>
        <name>substrate</name>
    </ligand>
</feature>
<feature type="binding site" evidence="1">
    <location>
        <begin position="139"/>
        <end position="141"/>
    </location>
    <ligand>
        <name>substrate</name>
    </ligand>
</feature>
<feature type="binding site" evidence="1">
    <location>
        <position position="187"/>
    </location>
    <ligand>
        <name>substrate</name>
    </ligand>
</feature>
<feature type="binding site" evidence="1">
    <location>
        <position position="319"/>
    </location>
    <ligand>
        <name>substrate</name>
    </ligand>
</feature>
<feature type="binding site" evidence="1">
    <location>
        <begin position="324"/>
        <end position="326"/>
    </location>
    <ligand>
        <name>substrate</name>
    </ligand>
</feature>
<feature type="site" description="Important for catalytic activity" evidence="1">
    <location>
        <position position="331"/>
    </location>
</feature>
<accession>Q7N4H8</accession>